<evidence type="ECO:0000250" key="1"/>
<evidence type="ECO:0000255" key="2"/>
<evidence type="ECO:0000269" key="3">
    <source>
    </source>
</evidence>
<evidence type="ECO:0000305" key="4"/>
<name>SIGE_MYCTE</name>
<comment type="function">
    <text evidence="1">Sigma factors are initiation factors that promote the attachment of RNA polymerase to specific initiation sites and are then released. Extracytoplasmic function (ECF) sigma factors are held in an inactive form by an anti-sigma factor until released. Responds to surface stress (H(2)O(2)) (By similarity).</text>
</comment>
<comment type="subunit">
    <text evidence="1">Interacts transiently with the RNA polymerase catalytic core formed by RpoA, RpoB, RpoC and RpoZ (2 alpha, 1 beta, 1 beta' and 1 omega subunit) to form the RNA polymerase holoenzyme that can initiate transcription. Interacts (via sigma-70 factor domain 4) with cognate anti-sigma-E factor RseA under reducing conditions, which stops the sigma factor from functioning (By similarity).</text>
</comment>
<comment type="induction">
    <text evidence="3">Not expressed in liquid culture (in vitro), induced by H(2)O(2) (at protein level). Expressed 6 hours after infection of human macrophages, expression continues for at least 5 days.</text>
</comment>
<comment type="domain">
    <text evidence="1">The sigma-70 factor domain-2 mediates sequence-specific interaction with the -10 element in promoter DNA, and plays an important role in melting the double-stranded DNA and the formation of the transcription bubble. The sigma-70 factor domain-2 mediates interaction with the RNA polymerase subunits RpoB and RpoC (By similarity).</text>
</comment>
<comment type="domain">
    <text evidence="1">The sigma-70 factor domain-4 contains a helix-turn-helix (H-T-H) motif that mediates interaction with the -35 element in promoter DNA. The domain also mediates interaction with the RNA polymerase subunit RpoA. Interactions between sigma-70 factor domain-4 and anti-sigma factors prevents interaction of sigma factors with the RNA polymerase catalytic core (By similarity).</text>
</comment>
<comment type="similarity">
    <text evidence="4">Belongs to the sigma-70 factor family. ECF subfamily.</text>
</comment>
<keyword id="KW-0238">DNA-binding</keyword>
<keyword id="KW-0731">Sigma factor</keyword>
<keyword id="KW-0804">Transcription</keyword>
<keyword id="KW-0805">Transcription regulation</keyword>
<dbReference type="EMBL" id="AP012340">
    <property type="protein sequence ID" value="BAL65169.1"/>
    <property type="molecule type" value="Genomic_DNA"/>
</dbReference>
<dbReference type="RefSeq" id="WP_003406257.1">
    <property type="nucleotide sequence ID" value="NZ_KK339487.1"/>
</dbReference>
<dbReference type="SMR" id="H8F0N6"/>
<dbReference type="GeneID" id="45425191"/>
<dbReference type="KEGG" id="mtn:ERDMAN_1366"/>
<dbReference type="PATRIC" id="fig|652616.3.peg.1387"/>
<dbReference type="HOGENOM" id="CLU_047691_1_0_11"/>
<dbReference type="GO" id="GO:0003677">
    <property type="term" value="F:DNA binding"/>
    <property type="evidence" value="ECO:0007669"/>
    <property type="project" value="UniProtKB-KW"/>
</dbReference>
<dbReference type="GO" id="GO:0016987">
    <property type="term" value="F:sigma factor activity"/>
    <property type="evidence" value="ECO:0007669"/>
    <property type="project" value="UniProtKB-KW"/>
</dbReference>
<dbReference type="GO" id="GO:0006352">
    <property type="term" value="P:DNA-templated transcription initiation"/>
    <property type="evidence" value="ECO:0007669"/>
    <property type="project" value="InterPro"/>
</dbReference>
<dbReference type="CDD" id="cd06171">
    <property type="entry name" value="Sigma70_r4"/>
    <property type="match status" value="1"/>
</dbReference>
<dbReference type="FunFam" id="1.10.10.10:FF:000068">
    <property type="entry name" value="RNA polymerase sigma factor"/>
    <property type="match status" value="1"/>
</dbReference>
<dbReference type="FunFam" id="1.10.1740.10:FF:000007">
    <property type="entry name" value="RNA polymerase sigma factor SigE"/>
    <property type="match status" value="1"/>
</dbReference>
<dbReference type="Gene3D" id="1.10.1740.10">
    <property type="match status" value="1"/>
</dbReference>
<dbReference type="Gene3D" id="1.10.10.10">
    <property type="entry name" value="Winged helix-like DNA-binding domain superfamily/Winged helix DNA-binding domain"/>
    <property type="match status" value="1"/>
</dbReference>
<dbReference type="InterPro" id="IPR039425">
    <property type="entry name" value="RNA_pol_sigma-70-like"/>
</dbReference>
<dbReference type="InterPro" id="IPR014284">
    <property type="entry name" value="RNA_pol_sigma-70_dom"/>
</dbReference>
<dbReference type="InterPro" id="IPR007627">
    <property type="entry name" value="RNA_pol_sigma70_r2"/>
</dbReference>
<dbReference type="InterPro" id="IPR013249">
    <property type="entry name" value="RNA_pol_sigma70_r4_t2"/>
</dbReference>
<dbReference type="InterPro" id="IPR013325">
    <property type="entry name" value="RNA_pol_sigma_r2"/>
</dbReference>
<dbReference type="InterPro" id="IPR013324">
    <property type="entry name" value="RNA_pol_sigma_r3/r4-like"/>
</dbReference>
<dbReference type="InterPro" id="IPR036388">
    <property type="entry name" value="WH-like_DNA-bd_sf"/>
</dbReference>
<dbReference type="NCBIfam" id="NF007229">
    <property type="entry name" value="PRK09647.1"/>
    <property type="match status" value="1"/>
</dbReference>
<dbReference type="NCBIfam" id="TIGR02937">
    <property type="entry name" value="sigma70-ECF"/>
    <property type="match status" value="1"/>
</dbReference>
<dbReference type="PANTHER" id="PTHR43133">
    <property type="entry name" value="RNA POLYMERASE ECF-TYPE SIGMA FACTO"/>
    <property type="match status" value="1"/>
</dbReference>
<dbReference type="PANTHER" id="PTHR43133:SF8">
    <property type="entry name" value="RNA POLYMERASE SIGMA FACTOR HI_1459-RELATED"/>
    <property type="match status" value="1"/>
</dbReference>
<dbReference type="Pfam" id="PF04542">
    <property type="entry name" value="Sigma70_r2"/>
    <property type="match status" value="1"/>
</dbReference>
<dbReference type="Pfam" id="PF08281">
    <property type="entry name" value="Sigma70_r4_2"/>
    <property type="match status" value="1"/>
</dbReference>
<dbReference type="SUPFAM" id="SSF88946">
    <property type="entry name" value="Sigma2 domain of RNA polymerase sigma factors"/>
    <property type="match status" value="1"/>
</dbReference>
<dbReference type="SUPFAM" id="SSF88659">
    <property type="entry name" value="Sigma3 and sigma4 domains of RNA polymerase sigma factors"/>
    <property type="match status" value="1"/>
</dbReference>
<protein>
    <recommendedName>
        <fullName>ECF RNA polymerase sigma factor SigE</fullName>
        <shortName>ECF sigma factor SigE</shortName>
    </recommendedName>
    <alternativeName>
        <fullName>Alternative RNA polymerase sigma factor SigE</fullName>
    </alternativeName>
    <alternativeName>
        <fullName>RNA polymerase sigma-E factor</fullName>
        <shortName>Sigma-E factor</shortName>
    </alternativeName>
</protein>
<organism>
    <name type="scientific">Mycobacterium tuberculosis (strain ATCC 35801 / TMC 107 / Erdman)</name>
    <dbReference type="NCBI Taxonomy" id="652616"/>
    <lineage>
        <taxon>Bacteria</taxon>
        <taxon>Bacillati</taxon>
        <taxon>Actinomycetota</taxon>
        <taxon>Actinomycetes</taxon>
        <taxon>Mycobacteriales</taxon>
        <taxon>Mycobacteriaceae</taxon>
        <taxon>Mycobacterium</taxon>
        <taxon>Mycobacterium tuberculosis complex</taxon>
    </lineage>
</organism>
<accession>H8F0N6</accession>
<sequence>MELLGGPRVGNTESQLCVADGDDLPTYCSANSEDLNITTITTLSPTSMSHPQQVRDDQWVEPSDQLQGTAVFDATGDKATMPSWDELVRQHADRVYRLAYRLSGNQHDAEDLTQETFIRVFRSVQNYQPGTFEGWLHRITTNLFLDMVRRRARIRMEALPEDYDRVPADEPNPEQIYHDARLGPDLQAALASLPPEFRAAVVLCDIEGLSYEEIGATLGVKLGTVRSRIHRGRQALRDYLAAHPEHGECAVHVNPVR</sequence>
<reference key="1">
    <citation type="journal article" date="2012" name="J. Bacteriol.">
        <title>Complete annotated genome sequence of Mycobacterium tuberculosis Erdman.</title>
        <authorList>
            <person name="Miyoshi-Akiyama T."/>
            <person name="Matsumura K."/>
            <person name="Iwai H."/>
            <person name="Funatogawa K."/>
            <person name="Kirikae T."/>
        </authorList>
    </citation>
    <scope>NUCLEOTIDE SEQUENCE [LARGE SCALE GENOMIC DNA]</scope>
    <source>
        <strain>ATCC 35801 / TMC 107 / Erdman</strain>
    </source>
</reference>
<reference key="2">
    <citation type="journal article" date="2001" name="Microb. Pathog.">
        <title>Differential expression of sigE by Mycobacterium tuberculosis during intracellular growth.</title>
        <authorList>
            <person name="Jensen-Cain D.M."/>
            <person name="Quinn F.D."/>
        </authorList>
    </citation>
    <scope>INDUCTION</scope>
    <source>
        <strain>ATCC 35801 / TMC 107 / Erdman</strain>
    </source>
</reference>
<proteinExistence type="evidence at protein level"/>
<feature type="chain" id="PRO_0000422947" description="ECF RNA polymerase sigma factor SigE">
    <location>
        <begin position="1"/>
        <end position="257"/>
    </location>
</feature>
<feature type="DNA-binding region" description="H-T-H motif" evidence="1">
    <location>
        <begin position="211"/>
        <end position="230"/>
    </location>
</feature>
<feature type="region of interest" description="Sigma-70 factor domain-2">
    <location>
        <begin position="87"/>
        <end position="153"/>
    </location>
</feature>
<feature type="region of interest" description="Sigma-70 factor domain-4">
    <location>
        <begin position="186"/>
        <end position="236"/>
    </location>
</feature>
<feature type="short sequence motif" description="Polymerase core binding" evidence="2">
    <location>
        <begin position="111"/>
        <end position="114"/>
    </location>
</feature>
<gene>
    <name type="primary">sigE</name>
    <name type="ordered locus">ERDMAN_1366</name>
</gene>